<accession>B8HST7</accession>
<feature type="chain" id="PRO_1000149868" description="UPF0284 protein Cyan7425_0342">
    <location>
        <begin position="1"/>
        <end position="368"/>
    </location>
</feature>
<evidence type="ECO:0000255" key="1">
    <source>
        <dbReference type="HAMAP-Rule" id="MF_01086"/>
    </source>
</evidence>
<organism>
    <name type="scientific">Cyanothece sp. (strain PCC 7425 / ATCC 29141)</name>
    <dbReference type="NCBI Taxonomy" id="395961"/>
    <lineage>
        <taxon>Bacteria</taxon>
        <taxon>Bacillati</taxon>
        <taxon>Cyanobacteriota</taxon>
        <taxon>Cyanophyceae</taxon>
        <taxon>Gomontiellales</taxon>
        <taxon>Cyanothecaceae</taxon>
        <taxon>Cyanothece</taxon>
    </lineage>
</organism>
<protein>
    <recommendedName>
        <fullName evidence="1">UPF0284 protein Cyan7425_0342</fullName>
    </recommendedName>
</protein>
<sequence length="368" mass="38250">MIRTYTQRALAQAWLNRFRGHLPAFACILGFTQTGLIPGISAAGATPADRQYTAIADAEFLLNGPQPQPRYPLPPLTAGASPVLISHAVVSGLGLPVYLFNAGLPIPPAVSAIDLGGEPARCLSTGAALNLATVHHLLTQGLVWGETLADQHPYLLLGECVVGGTTTALAILTGLGYAAATKVNSSHPICNHAQKWEIVQQGLGRSPLKPSHPAPLDLVAAVGDPMQIVVAGMTIAASRKVGVLLAGGTQMLAVYALARAIACTEQLVWQPEAVVVGTTRWVAEDPTGDTVGLAEETDIPLLGSQLSFVRSRFPQLQAYEQGYVKEGVGAGGCAIAASLYRGWGQQELLTAIEAVGDRYSQVSAGSGG</sequence>
<gene>
    <name type="ordered locus">Cyan7425_0342</name>
</gene>
<reference key="1">
    <citation type="journal article" date="2011" name="MBio">
        <title>Novel metabolic attributes of the genus Cyanothece, comprising a group of unicellular nitrogen-fixing Cyanobacteria.</title>
        <authorList>
            <person name="Bandyopadhyay A."/>
            <person name="Elvitigala T."/>
            <person name="Welsh E."/>
            <person name="Stockel J."/>
            <person name="Liberton M."/>
            <person name="Min H."/>
            <person name="Sherman L.A."/>
            <person name="Pakrasi H.B."/>
        </authorList>
    </citation>
    <scope>NUCLEOTIDE SEQUENCE [LARGE SCALE GENOMIC DNA]</scope>
    <source>
        <strain>PCC 7425 / ATCC 29141</strain>
    </source>
</reference>
<dbReference type="EMBL" id="CP001344">
    <property type="protein sequence ID" value="ACL42734.1"/>
    <property type="molecule type" value="Genomic_DNA"/>
</dbReference>
<dbReference type="SMR" id="B8HST7"/>
<dbReference type="STRING" id="395961.Cyan7425_0342"/>
<dbReference type="KEGG" id="cyn:Cyan7425_0342"/>
<dbReference type="eggNOG" id="COG2038">
    <property type="taxonomic scope" value="Bacteria"/>
</dbReference>
<dbReference type="HOGENOM" id="CLU_053134_1_0_3"/>
<dbReference type="OrthoDB" id="418257at2"/>
<dbReference type="GO" id="GO:0008939">
    <property type="term" value="F:nicotinate-nucleotide-dimethylbenzimidazole phosphoribosyltransferase activity"/>
    <property type="evidence" value="ECO:0007669"/>
    <property type="project" value="InterPro"/>
</dbReference>
<dbReference type="CDD" id="cd02439">
    <property type="entry name" value="DMB-PRT_CobT"/>
    <property type="match status" value="1"/>
</dbReference>
<dbReference type="Gene3D" id="3.40.50.10210">
    <property type="match status" value="1"/>
</dbReference>
<dbReference type="HAMAP" id="MF_01086">
    <property type="entry name" value="UPF0284"/>
    <property type="match status" value="1"/>
</dbReference>
<dbReference type="InterPro" id="IPR003200">
    <property type="entry name" value="Nict_dMeBzImd_PRibTrfase"/>
</dbReference>
<dbReference type="InterPro" id="IPR002805">
    <property type="entry name" value="Nict_dMeBzImd_PRibTrfase_arc"/>
</dbReference>
<dbReference type="InterPro" id="IPR036087">
    <property type="entry name" value="Nict_dMeBzImd_PRibTrfase_sf"/>
</dbReference>
<dbReference type="NCBIfam" id="TIGR00303">
    <property type="entry name" value="nicotinate mononucleotide-dependent phosphoribosyltransferase CobT"/>
    <property type="match status" value="1"/>
</dbReference>
<dbReference type="NCBIfam" id="NF003373">
    <property type="entry name" value="PRK04447.1-6"/>
    <property type="match status" value="1"/>
</dbReference>
<dbReference type="PANTHER" id="PTHR38811">
    <property type="match status" value="1"/>
</dbReference>
<dbReference type="PANTHER" id="PTHR38811:SF1">
    <property type="entry name" value="UPF0284 PROTEIN SLL1500"/>
    <property type="match status" value="1"/>
</dbReference>
<dbReference type="Pfam" id="PF02277">
    <property type="entry name" value="DBI_PRT"/>
    <property type="match status" value="1"/>
</dbReference>
<dbReference type="SUPFAM" id="SSF52733">
    <property type="entry name" value="Nicotinate mononucleotide:5,6-dimethylbenzimidazole phosphoribosyltransferase (CobT)"/>
    <property type="match status" value="1"/>
</dbReference>
<proteinExistence type="inferred from homology"/>
<name>Y342_CYAP4</name>
<comment type="similarity">
    <text evidence="1">Belongs to the UPF0284 family.</text>
</comment>